<accession>Q92A80</accession>
<feature type="chain" id="PRO_0000140606" description="Chorismate synthase">
    <location>
        <begin position="1"/>
        <end position="388"/>
    </location>
</feature>
<feature type="region of interest" description="Disordered" evidence="2">
    <location>
        <begin position="95"/>
        <end position="118"/>
    </location>
</feature>
<feature type="binding site" evidence="1">
    <location>
        <position position="39"/>
    </location>
    <ligand>
        <name>NADP(+)</name>
        <dbReference type="ChEBI" id="CHEBI:58349"/>
    </ligand>
</feature>
<feature type="binding site" evidence="1">
    <location>
        <position position="45"/>
    </location>
    <ligand>
        <name>NADP(+)</name>
        <dbReference type="ChEBI" id="CHEBI:58349"/>
    </ligand>
</feature>
<feature type="binding site" evidence="1">
    <location>
        <begin position="130"/>
        <end position="132"/>
    </location>
    <ligand>
        <name>FMN</name>
        <dbReference type="ChEBI" id="CHEBI:58210"/>
    </ligand>
</feature>
<feature type="binding site" evidence="1">
    <location>
        <begin position="251"/>
        <end position="252"/>
    </location>
    <ligand>
        <name>FMN</name>
        <dbReference type="ChEBI" id="CHEBI:58210"/>
    </ligand>
</feature>
<feature type="binding site" evidence="1">
    <location>
        <position position="296"/>
    </location>
    <ligand>
        <name>FMN</name>
        <dbReference type="ChEBI" id="CHEBI:58210"/>
    </ligand>
</feature>
<feature type="binding site" evidence="1">
    <location>
        <begin position="311"/>
        <end position="315"/>
    </location>
    <ligand>
        <name>FMN</name>
        <dbReference type="ChEBI" id="CHEBI:58210"/>
    </ligand>
</feature>
<feature type="binding site" evidence="1">
    <location>
        <position position="337"/>
    </location>
    <ligand>
        <name>FMN</name>
        <dbReference type="ChEBI" id="CHEBI:58210"/>
    </ligand>
</feature>
<organism>
    <name type="scientific">Listeria innocua serovar 6a (strain ATCC BAA-680 / CLIP 11262)</name>
    <dbReference type="NCBI Taxonomy" id="272626"/>
    <lineage>
        <taxon>Bacteria</taxon>
        <taxon>Bacillati</taxon>
        <taxon>Bacillota</taxon>
        <taxon>Bacilli</taxon>
        <taxon>Bacillales</taxon>
        <taxon>Listeriaceae</taxon>
        <taxon>Listeria</taxon>
    </lineage>
</organism>
<comment type="function">
    <text evidence="1">Catalyzes the anti-1,4-elimination of the C-3 phosphate and the C-6 proR hydrogen from 5-enolpyruvylshikimate-3-phosphate (EPSP) to yield chorismate, which is the branch point compound that serves as the starting substrate for the three terminal pathways of aromatic amino acid biosynthesis. This reaction introduces a second double bond into the aromatic ring system.</text>
</comment>
<comment type="catalytic activity">
    <reaction evidence="1">
        <text>5-O-(1-carboxyvinyl)-3-phosphoshikimate = chorismate + phosphate</text>
        <dbReference type="Rhea" id="RHEA:21020"/>
        <dbReference type="ChEBI" id="CHEBI:29748"/>
        <dbReference type="ChEBI" id="CHEBI:43474"/>
        <dbReference type="ChEBI" id="CHEBI:57701"/>
        <dbReference type="EC" id="4.2.3.5"/>
    </reaction>
</comment>
<comment type="cofactor">
    <cofactor evidence="1">
        <name>FMNH2</name>
        <dbReference type="ChEBI" id="CHEBI:57618"/>
    </cofactor>
    <text evidence="1">Reduced FMN (FMNH(2)).</text>
</comment>
<comment type="pathway">
    <text evidence="1">Metabolic intermediate biosynthesis; chorismate biosynthesis; chorismate from D-erythrose 4-phosphate and phosphoenolpyruvate: step 7/7.</text>
</comment>
<comment type="subunit">
    <text evidence="1">Homotetramer.</text>
</comment>
<comment type="similarity">
    <text evidence="1">Belongs to the chorismate synthase family.</text>
</comment>
<name>AROC_LISIN</name>
<dbReference type="EC" id="4.2.3.5" evidence="1"/>
<dbReference type="EMBL" id="AL596170">
    <property type="protein sequence ID" value="CAC97272.1"/>
    <property type="molecule type" value="Genomic_DNA"/>
</dbReference>
<dbReference type="PIR" id="AH1687">
    <property type="entry name" value="AH1687"/>
</dbReference>
<dbReference type="RefSeq" id="WP_003763121.1">
    <property type="nucleotide sequence ID" value="NC_003212.1"/>
</dbReference>
<dbReference type="SMR" id="Q92A80"/>
<dbReference type="STRING" id="272626.gene:17566400"/>
<dbReference type="GeneID" id="93235381"/>
<dbReference type="KEGG" id="lin:aroF"/>
<dbReference type="eggNOG" id="COG0082">
    <property type="taxonomic scope" value="Bacteria"/>
</dbReference>
<dbReference type="HOGENOM" id="CLU_034547_2_0_9"/>
<dbReference type="OrthoDB" id="9771806at2"/>
<dbReference type="UniPathway" id="UPA00053">
    <property type="reaction ID" value="UER00090"/>
</dbReference>
<dbReference type="Proteomes" id="UP000002513">
    <property type="component" value="Chromosome"/>
</dbReference>
<dbReference type="GO" id="GO:0005829">
    <property type="term" value="C:cytosol"/>
    <property type="evidence" value="ECO:0007669"/>
    <property type="project" value="TreeGrafter"/>
</dbReference>
<dbReference type="GO" id="GO:0004107">
    <property type="term" value="F:chorismate synthase activity"/>
    <property type="evidence" value="ECO:0007669"/>
    <property type="project" value="UniProtKB-UniRule"/>
</dbReference>
<dbReference type="GO" id="GO:0010181">
    <property type="term" value="F:FMN binding"/>
    <property type="evidence" value="ECO:0007669"/>
    <property type="project" value="TreeGrafter"/>
</dbReference>
<dbReference type="GO" id="GO:0008652">
    <property type="term" value="P:amino acid biosynthetic process"/>
    <property type="evidence" value="ECO:0007669"/>
    <property type="project" value="UniProtKB-KW"/>
</dbReference>
<dbReference type="GO" id="GO:0009073">
    <property type="term" value="P:aromatic amino acid family biosynthetic process"/>
    <property type="evidence" value="ECO:0007669"/>
    <property type="project" value="UniProtKB-KW"/>
</dbReference>
<dbReference type="GO" id="GO:0009423">
    <property type="term" value="P:chorismate biosynthetic process"/>
    <property type="evidence" value="ECO:0007669"/>
    <property type="project" value="UniProtKB-UniRule"/>
</dbReference>
<dbReference type="CDD" id="cd07304">
    <property type="entry name" value="Chorismate_synthase"/>
    <property type="match status" value="1"/>
</dbReference>
<dbReference type="FunFam" id="3.60.150.10:FF:000002">
    <property type="entry name" value="Chorismate synthase"/>
    <property type="match status" value="1"/>
</dbReference>
<dbReference type="Gene3D" id="3.60.150.10">
    <property type="entry name" value="Chorismate synthase AroC"/>
    <property type="match status" value="1"/>
</dbReference>
<dbReference type="HAMAP" id="MF_00300">
    <property type="entry name" value="Chorismate_synth"/>
    <property type="match status" value="1"/>
</dbReference>
<dbReference type="InterPro" id="IPR000453">
    <property type="entry name" value="Chorismate_synth"/>
</dbReference>
<dbReference type="InterPro" id="IPR035904">
    <property type="entry name" value="Chorismate_synth_AroC_sf"/>
</dbReference>
<dbReference type="InterPro" id="IPR020541">
    <property type="entry name" value="Chorismate_synthase_CS"/>
</dbReference>
<dbReference type="NCBIfam" id="TIGR00033">
    <property type="entry name" value="aroC"/>
    <property type="match status" value="1"/>
</dbReference>
<dbReference type="NCBIfam" id="NF003793">
    <property type="entry name" value="PRK05382.1"/>
    <property type="match status" value="1"/>
</dbReference>
<dbReference type="PANTHER" id="PTHR21085">
    <property type="entry name" value="CHORISMATE SYNTHASE"/>
    <property type="match status" value="1"/>
</dbReference>
<dbReference type="PANTHER" id="PTHR21085:SF0">
    <property type="entry name" value="CHORISMATE SYNTHASE"/>
    <property type="match status" value="1"/>
</dbReference>
<dbReference type="Pfam" id="PF01264">
    <property type="entry name" value="Chorismate_synt"/>
    <property type="match status" value="1"/>
</dbReference>
<dbReference type="PIRSF" id="PIRSF001456">
    <property type="entry name" value="Chorismate_synth"/>
    <property type="match status" value="1"/>
</dbReference>
<dbReference type="SUPFAM" id="SSF103263">
    <property type="entry name" value="Chorismate synthase, AroC"/>
    <property type="match status" value="1"/>
</dbReference>
<dbReference type="PROSITE" id="PS00787">
    <property type="entry name" value="CHORISMATE_SYNTHASE_1"/>
    <property type="match status" value="1"/>
</dbReference>
<dbReference type="PROSITE" id="PS00788">
    <property type="entry name" value="CHORISMATE_SYNTHASE_2"/>
    <property type="match status" value="1"/>
</dbReference>
<dbReference type="PROSITE" id="PS00789">
    <property type="entry name" value="CHORISMATE_SYNTHASE_3"/>
    <property type="match status" value="1"/>
</dbReference>
<sequence>MRYLTAGESHGPGLTTIIEGLPAGMPLLAEDVNKELKRRQGGHGRGARMRIEKDQVQITAGIRHGKTLGAPVAMFVENKDWKHWETVMSIEPVPEKNEKSRRVSRPRPGHADLVGGMKYGHNDMRNVLERSSARETTVRVAAGAVAKKLLHELGIEVAGHVLEIGGTRANLKRDYAVSEIQETSEASPVRCLDEVAAEEMMQKIDDAKKNGDTIGGIVEVVVGGVPAGLGSYVQWDKKLDAKIARAIVSINAFKGAEFGVGFEAARKPGSEVMDEILWSKEDGYTRRTNNLGGFEGGMTNGMPIVVRGVMKPIPTLYKPLQSVDIDSKETFNASVERSDSCAVPAASVVAEAVVAWEVAVAVLEKFDGDRFDTLKKHVEEHRNLTKEF</sequence>
<protein>
    <recommendedName>
        <fullName evidence="1">Chorismate synthase</fullName>
        <shortName evidence="1">CS</shortName>
        <ecNumber evidence="1">4.2.3.5</ecNumber>
    </recommendedName>
    <alternativeName>
        <fullName evidence="1">5-enolpyruvylshikimate-3-phosphate phospholyase</fullName>
    </alternativeName>
</protein>
<evidence type="ECO:0000255" key="1">
    <source>
        <dbReference type="HAMAP-Rule" id="MF_00300"/>
    </source>
</evidence>
<evidence type="ECO:0000256" key="2">
    <source>
        <dbReference type="SAM" id="MobiDB-lite"/>
    </source>
</evidence>
<proteinExistence type="inferred from homology"/>
<keyword id="KW-0028">Amino-acid biosynthesis</keyword>
<keyword id="KW-0057">Aromatic amino acid biosynthesis</keyword>
<keyword id="KW-0274">FAD</keyword>
<keyword id="KW-0285">Flavoprotein</keyword>
<keyword id="KW-0288">FMN</keyword>
<keyword id="KW-0456">Lyase</keyword>
<keyword id="KW-0521">NADP</keyword>
<gene>
    <name evidence="1" type="primary">aroC</name>
    <name type="synonym">aroF</name>
    <name type="ordered locus">lin2042</name>
</gene>
<reference key="1">
    <citation type="journal article" date="2001" name="Science">
        <title>Comparative genomics of Listeria species.</title>
        <authorList>
            <person name="Glaser P."/>
            <person name="Frangeul L."/>
            <person name="Buchrieser C."/>
            <person name="Rusniok C."/>
            <person name="Amend A."/>
            <person name="Baquero F."/>
            <person name="Berche P."/>
            <person name="Bloecker H."/>
            <person name="Brandt P."/>
            <person name="Chakraborty T."/>
            <person name="Charbit A."/>
            <person name="Chetouani F."/>
            <person name="Couve E."/>
            <person name="de Daruvar A."/>
            <person name="Dehoux P."/>
            <person name="Domann E."/>
            <person name="Dominguez-Bernal G."/>
            <person name="Duchaud E."/>
            <person name="Durant L."/>
            <person name="Dussurget O."/>
            <person name="Entian K.-D."/>
            <person name="Fsihi H."/>
            <person name="Garcia-del Portillo F."/>
            <person name="Garrido P."/>
            <person name="Gautier L."/>
            <person name="Goebel W."/>
            <person name="Gomez-Lopez N."/>
            <person name="Hain T."/>
            <person name="Hauf J."/>
            <person name="Jackson D."/>
            <person name="Jones L.-M."/>
            <person name="Kaerst U."/>
            <person name="Kreft J."/>
            <person name="Kuhn M."/>
            <person name="Kunst F."/>
            <person name="Kurapkat G."/>
            <person name="Madueno E."/>
            <person name="Maitournam A."/>
            <person name="Mata Vicente J."/>
            <person name="Ng E."/>
            <person name="Nedjari H."/>
            <person name="Nordsiek G."/>
            <person name="Novella S."/>
            <person name="de Pablos B."/>
            <person name="Perez-Diaz J.-C."/>
            <person name="Purcell R."/>
            <person name="Remmel B."/>
            <person name="Rose M."/>
            <person name="Schlueter T."/>
            <person name="Simoes N."/>
            <person name="Tierrez A."/>
            <person name="Vazquez-Boland J.-A."/>
            <person name="Voss H."/>
            <person name="Wehland J."/>
            <person name="Cossart P."/>
        </authorList>
    </citation>
    <scope>NUCLEOTIDE SEQUENCE [LARGE SCALE GENOMIC DNA]</scope>
    <source>
        <strain>ATCC BAA-680 / CLIP 11262</strain>
    </source>
</reference>